<dbReference type="EMBL" id="AF111997">
    <property type="protein sequence ID" value="AAF23873.1"/>
    <property type="molecule type" value="Genomic_RNA"/>
</dbReference>
<dbReference type="EMBL" id="AF072912">
    <property type="protein sequence ID" value="AAD39042.1"/>
    <property type="molecule type" value="Genomic_RNA"/>
</dbReference>
<dbReference type="SMR" id="Q9PZ49"/>
<dbReference type="GO" id="GO:0044172">
    <property type="term" value="C:host cell endoplasmic reticulum-Golgi intermediate compartment"/>
    <property type="evidence" value="ECO:0007669"/>
    <property type="project" value="UniProtKB-SubCell"/>
</dbReference>
<dbReference type="GO" id="GO:0044177">
    <property type="term" value="C:host cell Golgi apparatus"/>
    <property type="evidence" value="ECO:0007669"/>
    <property type="project" value="UniProtKB-SubCell"/>
</dbReference>
<dbReference type="GO" id="GO:1990904">
    <property type="term" value="C:ribonucleoprotein complex"/>
    <property type="evidence" value="ECO:0007669"/>
    <property type="project" value="UniProtKB-KW"/>
</dbReference>
<dbReference type="GO" id="GO:0019013">
    <property type="term" value="C:viral nucleocapsid"/>
    <property type="evidence" value="ECO:0007669"/>
    <property type="project" value="UniProtKB-UniRule"/>
</dbReference>
<dbReference type="GO" id="GO:0003723">
    <property type="term" value="F:RNA binding"/>
    <property type="evidence" value="ECO:0007669"/>
    <property type="project" value="UniProtKB-UniRule"/>
</dbReference>
<dbReference type="CDD" id="cd21595">
    <property type="entry name" value="CoV_N-CTD"/>
    <property type="match status" value="1"/>
</dbReference>
<dbReference type="CDD" id="cd21554">
    <property type="entry name" value="CoV_N-NTD"/>
    <property type="match status" value="1"/>
</dbReference>
<dbReference type="HAMAP" id="MF_04097">
    <property type="entry name" value="GAMMA_CORONA_NCAP"/>
    <property type="match status" value="1"/>
</dbReference>
<dbReference type="InterPro" id="IPR044344">
    <property type="entry name" value="N_prot_C_CoV"/>
</dbReference>
<dbReference type="InterPro" id="IPR044345">
    <property type="entry name" value="N_prot_N_CoV"/>
</dbReference>
<dbReference type="InterPro" id="IPR042547">
    <property type="entry name" value="NCAP_gCoV"/>
</dbReference>
<dbReference type="InterPro" id="IPR001218">
    <property type="entry name" value="Nucleocap_CoV"/>
</dbReference>
<dbReference type="InterPro" id="IPR037179">
    <property type="entry name" value="Nucleocapsid_C"/>
</dbReference>
<dbReference type="InterPro" id="IPR037195">
    <property type="entry name" value="Nucleocapsid_N"/>
</dbReference>
<dbReference type="Pfam" id="PF00937">
    <property type="entry name" value="CoV_nucleocap"/>
    <property type="match status" value="1"/>
</dbReference>
<dbReference type="PIRSF" id="PIRSF003888">
    <property type="entry name" value="Corona_nucleocap"/>
    <property type="match status" value="1"/>
</dbReference>
<dbReference type="SUPFAM" id="SSF110304">
    <property type="entry name" value="Coronavirus RNA-binding domain"/>
    <property type="match status" value="1"/>
</dbReference>
<dbReference type="SUPFAM" id="SSF103068">
    <property type="entry name" value="Nucleocapsid protein dimerization domain"/>
    <property type="match status" value="1"/>
</dbReference>
<dbReference type="PROSITE" id="PS51929">
    <property type="entry name" value="COV_N_CTD"/>
    <property type="match status" value="1"/>
</dbReference>
<dbReference type="PROSITE" id="PS51928">
    <property type="entry name" value="COV_N_NTD"/>
    <property type="match status" value="1"/>
</dbReference>
<feature type="chain" id="PRO_0000106021" description="Nucleoprotein">
    <location>
        <begin position="1"/>
        <end position="409"/>
    </location>
</feature>
<feature type="domain" description="CoV N NTD" evidence="2">
    <location>
        <begin position="31"/>
        <end position="156"/>
    </location>
</feature>
<feature type="domain" description="CoV N CTD" evidence="3">
    <location>
        <begin position="215"/>
        <end position="331"/>
    </location>
</feature>
<feature type="region of interest" description="Disordered" evidence="4">
    <location>
        <begin position="1"/>
        <end position="84"/>
    </location>
</feature>
<feature type="region of interest" description="RNA-binding" evidence="1">
    <location>
        <begin position="29"/>
        <end position="160"/>
    </location>
</feature>
<feature type="region of interest" description="Disordered" evidence="4">
    <location>
        <begin position="122"/>
        <end position="145"/>
    </location>
</feature>
<feature type="region of interest" description="Disordered" evidence="4">
    <location>
        <begin position="164"/>
        <end position="194"/>
    </location>
</feature>
<feature type="region of interest" description="Dimerization" evidence="1">
    <location>
        <begin position="226"/>
        <end position="333"/>
    </location>
</feature>
<feature type="region of interest" description="Disordered" evidence="4">
    <location>
        <begin position="238"/>
        <end position="258"/>
    </location>
</feature>
<feature type="region of interest" description="Disordered" evidence="4">
    <location>
        <begin position="327"/>
        <end position="409"/>
    </location>
</feature>
<feature type="compositionally biased region" description="Low complexity" evidence="4">
    <location>
        <begin position="15"/>
        <end position="31"/>
    </location>
</feature>
<feature type="compositionally biased region" description="Basic residues" evidence="4">
    <location>
        <begin position="70"/>
        <end position="84"/>
    </location>
</feature>
<feature type="compositionally biased region" description="Low complexity" evidence="4">
    <location>
        <begin position="166"/>
        <end position="179"/>
    </location>
</feature>
<feature type="compositionally biased region" description="Basic and acidic residues" evidence="4">
    <location>
        <begin position="180"/>
        <end position="192"/>
    </location>
</feature>
<feature type="compositionally biased region" description="Basic and acidic residues" evidence="4">
    <location>
        <begin position="247"/>
        <end position="258"/>
    </location>
</feature>
<feature type="compositionally biased region" description="Basic residues" evidence="4">
    <location>
        <begin position="358"/>
        <end position="367"/>
    </location>
</feature>
<feature type="compositionally biased region" description="Basic and acidic residues" evidence="4">
    <location>
        <begin position="368"/>
        <end position="384"/>
    </location>
</feature>
<feature type="modified residue" description="Phosphoserine; by host" evidence="1">
    <location>
        <position position="190"/>
    </location>
</feature>
<feature type="modified residue" description="Phosphoserine; by host" evidence="1">
    <location>
        <position position="192"/>
    </location>
</feature>
<feature type="modified residue" description="Phosphothreonine; by host" evidence="1">
    <location>
        <position position="378"/>
    </location>
</feature>
<feature type="modified residue" description="Phosphoserine; by host" evidence="1">
    <location>
        <position position="379"/>
    </location>
</feature>
<feature type="disulfide bond" evidence="1">
    <location>
        <begin position="320"/>
        <end position="323"/>
    </location>
</feature>
<gene>
    <name evidence="1" type="primary">N</name>
</gene>
<organismHost>
    <name type="scientific">Meleagris gallopavo</name>
    <name type="common">Wild turkey</name>
    <dbReference type="NCBI Taxonomy" id="9103"/>
</organismHost>
<protein>
    <recommendedName>
        <fullName evidence="1">Nucleoprotein</fullName>
    </recommendedName>
    <alternativeName>
        <fullName evidence="1">Nucleocapsid protein</fullName>
        <shortName evidence="1">NC</shortName>
        <shortName evidence="1">Protein N</shortName>
    </alternativeName>
</protein>
<name>NCAP_CVTNC</name>
<comment type="function">
    <text evidence="1">Packages the positive strand viral genome RNA into a helical ribonucleocapsid (RNP) and plays a fundamental role during virion assembly through its interactions with the viral genome and membrane protein M. Plays an important role in enhancing the efficiency of subgenomic viral RNA transcription as well as viral replication.</text>
</comment>
<comment type="subunit">
    <text evidence="1">Homooligomer. Both monomeric and oligomeric forms interact with RNA. Interacts with protein M. Interacts with NSP3; this interaction serves to tether the genome to the newly translated replicase-transcriptase complex at a very early stage of infection.</text>
</comment>
<comment type="subcellular location">
    <subcellularLocation>
        <location evidence="1">Virion</location>
    </subcellularLocation>
    <subcellularLocation>
        <location evidence="1">Host endoplasmic reticulum-Golgi intermediate compartment</location>
    </subcellularLocation>
    <subcellularLocation>
        <location evidence="1">Host Golgi apparatus</location>
    </subcellularLocation>
    <text evidence="1">Located inside the virion, complexed with the viral RNA. Probably associates with ER-derived membranes where it participates in viral RNA synthesis and virus budding.</text>
</comment>
<comment type="PTM">
    <text evidence="1">ADP-ribosylated. The ADP-ribosylation is retained in the virion during infection.</text>
</comment>
<comment type="PTM">
    <text evidence="1">Phosphorylated on serine and threonine residues.</text>
</comment>
<comment type="similarity">
    <text evidence="1">Belongs to the gammacoronavirus nucleocapsid protein family.</text>
</comment>
<sequence>MASGKATGKTDAPAPIIKLGGPKPPKVGSSGNASWFQSIKAKKLNSPQPKFEGSGVPDNENIKTSQQHGYWRRQARFKPGKGGRKPVPDAWYFYYTGTGPAADLNWGDTQDGIVWVAAKGADVKSRSNQGTRDPDKFDQYPLRFSDGGPDSNFRWDFIPLHRGRSGRSTAASSAASSRAPSRDGSRGRRSGSEDDLIARAAKIIQDQQKKGSRITKAKADEMAHRRYCKRTVPPGYKVDQVFGPRTKGKEGNFGDDKMNEEGIKDGRVTAMLNLVPSSHACLFGSRVTPKLQPDGLHLRFEFTTVVPRDDPQFDNYVTICDQCVDGIGTRPKDNEPRPKSRPSSRPATRGNSPAPRQQRPKKEKKPKKQDDEVDKALTSDEERNNAQLEFDDEPKVINWGDSALGENHL</sequence>
<evidence type="ECO:0000255" key="1">
    <source>
        <dbReference type="HAMAP-Rule" id="MF_04097"/>
    </source>
</evidence>
<evidence type="ECO:0000255" key="2">
    <source>
        <dbReference type="PROSITE-ProRule" id="PRU01276"/>
    </source>
</evidence>
<evidence type="ECO:0000255" key="3">
    <source>
        <dbReference type="PROSITE-ProRule" id="PRU01277"/>
    </source>
</evidence>
<evidence type="ECO:0000256" key="4">
    <source>
        <dbReference type="SAM" id="MobiDB-lite"/>
    </source>
</evidence>
<accession>Q9PZ49</accession>
<accession>Q9WSB1</accession>
<reference key="1">
    <citation type="journal article" date="1999" name="Virus Res.">
        <title>Sequence analysis of the turkey coronavirus nucleocapsid protein gene and 3' untranslated region identifies the virus as a close relative of infectious bronchitis virus.</title>
        <authorList>
            <person name="Breslin J.J."/>
            <person name="Smith L.G."/>
            <person name="Fuller F.J."/>
            <person name="Guy J.S."/>
        </authorList>
    </citation>
    <scope>NUCLEOTIDE SEQUENCE [GENOMIC RNA]</scope>
</reference>
<reference key="2">
    <citation type="journal article" date="1999" name="Intervirology">
        <title>Sequence analysis of the matrix/nucleocapsid gene region of turkey coronavirus.</title>
        <authorList>
            <person name="Breslin J.J."/>
            <person name="Smith L.G."/>
            <person name="Fuller F.J."/>
            <person name="Guy J.S."/>
        </authorList>
    </citation>
    <scope>NUCLEOTIDE SEQUENCE [GENOMIC RNA] OF 1-55</scope>
</reference>
<organism>
    <name type="scientific">Turkey coronavirus (strain NC95)</name>
    <name type="common">TCoV</name>
    <name type="synonym">TCV</name>
    <dbReference type="NCBI Taxonomy" id="231431"/>
    <lineage>
        <taxon>Viruses</taxon>
        <taxon>Riboviria</taxon>
        <taxon>Orthornavirae</taxon>
        <taxon>Pisuviricota</taxon>
        <taxon>Pisoniviricetes</taxon>
        <taxon>Nidovirales</taxon>
        <taxon>Cornidovirineae</taxon>
        <taxon>Coronaviridae</taxon>
        <taxon>Orthocoronavirinae</taxon>
        <taxon>Gammacoronavirus</taxon>
        <taxon>Igacovirus</taxon>
        <taxon>Avian coronavirus</taxon>
    </lineage>
</organism>
<proteinExistence type="inferred from homology"/>
<keyword id="KW-0013">ADP-ribosylation</keyword>
<keyword id="KW-1015">Disulfide bond</keyword>
<keyword id="KW-1040">Host Golgi apparatus</keyword>
<keyword id="KW-0597">Phosphoprotein</keyword>
<keyword id="KW-0687">Ribonucleoprotein</keyword>
<keyword id="KW-0694">RNA-binding</keyword>
<keyword id="KW-0804">Transcription</keyword>
<keyword id="KW-0805">Transcription regulation</keyword>
<keyword id="KW-0543">Viral nucleoprotein</keyword>
<keyword id="KW-0946">Virion</keyword>